<dbReference type="EC" id="2.1.2.11" evidence="1"/>
<dbReference type="EMBL" id="AE017282">
    <property type="protein sequence ID" value="AAU91633.1"/>
    <property type="molecule type" value="Genomic_DNA"/>
</dbReference>
<dbReference type="RefSeq" id="WP_010961542.1">
    <property type="nucleotide sequence ID" value="NC_002977.6"/>
</dbReference>
<dbReference type="SMR" id="Q605H0"/>
<dbReference type="STRING" id="243233.MCA2314"/>
<dbReference type="GeneID" id="88224518"/>
<dbReference type="KEGG" id="mca:MCA2314"/>
<dbReference type="eggNOG" id="COG0413">
    <property type="taxonomic scope" value="Bacteria"/>
</dbReference>
<dbReference type="HOGENOM" id="CLU_036645_1_0_6"/>
<dbReference type="UniPathway" id="UPA00028">
    <property type="reaction ID" value="UER00003"/>
</dbReference>
<dbReference type="Proteomes" id="UP000006821">
    <property type="component" value="Chromosome"/>
</dbReference>
<dbReference type="GO" id="GO:0005737">
    <property type="term" value="C:cytoplasm"/>
    <property type="evidence" value="ECO:0007669"/>
    <property type="project" value="UniProtKB-SubCell"/>
</dbReference>
<dbReference type="GO" id="GO:0003864">
    <property type="term" value="F:3-methyl-2-oxobutanoate hydroxymethyltransferase activity"/>
    <property type="evidence" value="ECO:0007669"/>
    <property type="project" value="UniProtKB-UniRule"/>
</dbReference>
<dbReference type="GO" id="GO:0000287">
    <property type="term" value="F:magnesium ion binding"/>
    <property type="evidence" value="ECO:0007669"/>
    <property type="project" value="TreeGrafter"/>
</dbReference>
<dbReference type="GO" id="GO:0015940">
    <property type="term" value="P:pantothenate biosynthetic process"/>
    <property type="evidence" value="ECO:0007669"/>
    <property type="project" value="UniProtKB-UniRule"/>
</dbReference>
<dbReference type="CDD" id="cd06557">
    <property type="entry name" value="KPHMT-like"/>
    <property type="match status" value="1"/>
</dbReference>
<dbReference type="FunFam" id="3.20.20.60:FF:000003">
    <property type="entry name" value="3-methyl-2-oxobutanoate hydroxymethyltransferase"/>
    <property type="match status" value="1"/>
</dbReference>
<dbReference type="Gene3D" id="3.20.20.60">
    <property type="entry name" value="Phosphoenolpyruvate-binding domains"/>
    <property type="match status" value="1"/>
</dbReference>
<dbReference type="HAMAP" id="MF_00156">
    <property type="entry name" value="PanB"/>
    <property type="match status" value="1"/>
</dbReference>
<dbReference type="InterPro" id="IPR003700">
    <property type="entry name" value="Pantoate_hydroxy_MeTrfase"/>
</dbReference>
<dbReference type="InterPro" id="IPR015813">
    <property type="entry name" value="Pyrv/PenolPyrv_kinase-like_dom"/>
</dbReference>
<dbReference type="InterPro" id="IPR040442">
    <property type="entry name" value="Pyrv_kinase-like_dom_sf"/>
</dbReference>
<dbReference type="NCBIfam" id="TIGR00222">
    <property type="entry name" value="panB"/>
    <property type="match status" value="1"/>
</dbReference>
<dbReference type="NCBIfam" id="NF001452">
    <property type="entry name" value="PRK00311.1"/>
    <property type="match status" value="1"/>
</dbReference>
<dbReference type="PANTHER" id="PTHR20881">
    <property type="entry name" value="3-METHYL-2-OXOBUTANOATE HYDROXYMETHYLTRANSFERASE"/>
    <property type="match status" value="1"/>
</dbReference>
<dbReference type="PANTHER" id="PTHR20881:SF0">
    <property type="entry name" value="3-METHYL-2-OXOBUTANOATE HYDROXYMETHYLTRANSFERASE"/>
    <property type="match status" value="1"/>
</dbReference>
<dbReference type="Pfam" id="PF02548">
    <property type="entry name" value="Pantoate_transf"/>
    <property type="match status" value="1"/>
</dbReference>
<dbReference type="PIRSF" id="PIRSF000388">
    <property type="entry name" value="Pantoate_hydroxy_MeTrfase"/>
    <property type="match status" value="1"/>
</dbReference>
<dbReference type="SUPFAM" id="SSF51621">
    <property type="entry name" value="Phosphoenolpyruvate/pyruvate domain"/>
    <property type="match status" value="1"/>
</dbReference>
<evidence type="ECO:0000255" key="1">
    <source>
        <dbReference type="HAMAP-Rule" id="MF_00156"/>
    </source>
</evidence>
<proteinExistence type="inferred from homology"/>
<organism>
    <name type="scientific">Methylococcus capsulatus (strain ATCC 33009 / NCIMB 11132 / Bath)</name>
    <dbReference type="NCBI Taxonomy" id="243233"/>
    <lineage>
        <taxon>Bacteria</taxon>
        <taxon>Pseudomonadati</taxon>
        <taxon>Pseudomonadota</taxon>
        <taxon>Gammaproteobacteria</taxon>
        <taxon>Methylococcales</taxon>
        <taxon>Methylococcaceae</taxon>
        <taxon>Methylococcus</taxon>
    </lineage>
</organism>
<feature type="chain" id="PRO_0000184860" description="3-methyl-2-oxobutanoate hydroxymethyltransferase">
    <location>
        <begin position="1"/>
        <end position="269"/>
    </location>
</feature>
<feature type="active site" description="Proton acceptor" evidence="1">
    <location>
        <position position="183"/>
    </location>
</feature>
<feature type="binding site" evidence="1">
    <location>
        <begin position="46"/>
        <end position="47"/>
    </location>
    <ligand>
        <name>3-methyl-2-oxobutanoate</name>
        <dbReference type="ChEBI" id="CHEBI:11851"/>
    </ligand>
</feature>
<feature type="binding site" evidence="1">
    <location>
        <position position="46"/>
    </location>
    <ligand>
        <name>Mg(2+)</name>
        <dbReference type="ChEBI" id="CHEBI:18420"/>
    </ligand>
</feature>
<feature type="binding site" evidence="1">
    <location>
        <position position="85"/>
    </location>
    <ligand>
        <name>3-methyl-2-oxobutanoate</name>
        <dbReference type="ChEBI" id="CHEBI:11851"/>
    </ligand>
</feature>
<feature type="binding site" evidence="1">
    <location>
        <position position="85"/>
    </location>
    <ligand>
        <name>Mg(2+)</name>
        <dbReference type="ChEBI" id="CHEBI:18420"/>
    </ligand>
</feature>
<feature type="binding site" evidence="1">
    <location>
        <position position="114"/>
    </location>
    <ligand>
        <name>3-methyl-2-oxobutanoate</name>
        <dbReference type="ChEBI" id="CHEBI:11851"/>
    </ligand>
</feature>
<feature type="binding site" evidence="1">
    <location>
        <position position="116"/>
    </location>
    <ligand>
        <name>Mg(2+)</name>
        <dbReference type="ChEBI" id="CHEBI:18420"/>
    </ligand>
</feature>
<comment type="function">
    <text evidence="1">Catalyzes the reversible reaction in which hydroxymethyl group from 5,10-methylenetetrahydrofolate is transferred onto alpha-ketoisovalerate to form ketopantoate.</text>
</comment>
<comment type="catalytic activity">
    <reaction evidence="1">
        <text>3-methyl-2-oxobutanoate + (6R)-5,10-methylene-5,6,7,8-tetrahydrofolate + H2O = 2-dehydropantoate + (6S)-5,6,7,8-tetrahydrofolate</text>
        <dbReference type="Rhea" id="RHEA:11824"/>
        <dbReference type="ChEBI" id="CHEBI:11561"/>
        <dbReference type="ChEBI" id="CHEBI:11851"/>
        <dbReference type="ChEBI" id="CHEBI:15377"/>
        <dbReference type="ChEBI" id="CHEBI:15636"/>
        <dbReference type="ChEBI" id="CHEBI:57453"/>
        <dbReference type="EC" id="2.1.2.11"/>
    </reaction>
</comment>
<comment type="cofactor">
    <cofactor evidence="1">
        <name>Mg(2+)</name>
        <dbReference type="ChEBI" id="CHEBI:18420"/>
    </cofactor>
    <text evidence="1">Binds 1 Mg(2+) ion per subunit.</text>
</comment>
<comment type="pathway">
    <text evidence="1">Cofactor biosynthesis; (R)-pantothenate biosynthesis; (R)-pantoate from 3-methyl-2-oxobutanoate: step 1/2.</text>
</comment>
<comment type="subunit">
    <text evidence="1">Homodecamer; pentamer of dimers.</text>
</comment>
<comment type="subcellular location">
    <subcellularLocation>
        <location evidence="1">Cytoplasm</location>
    </subcellularLocation>
</comment>
<comment type="similarity">
    <text evidence="1">Belongs to the PanB family.</text>
</comment>
<sequence>MTDPVTLPDLLAMKRRGEKIACLTAYDASSAALQDEAGIEVILVGDSLGNVIQGQPTTLSVTLDHMVYHTACVQRAARRALVLADLPFLSYCTPEQAVRSAARLIRDGGAQVVKLEGGRERLDVVRFLTEQNVPVCGHLGLQPQAIHRLGRYALQGRDAESACRMVEDARQLAEAGAMLLVLECIPWELAQEITAAVDIPTIGIGAGRHCDGQVLVWQDMLGMSARLPRFCKDFLAGNAGVREAVSAYVREVKAGIFPGDRHSFGRDGP</sequence>
<reference key="1">
    <citation type="journal article" date="2004" name="PLoS Biol.">
        <title>Genomic insights into methanotrophy: the complete genome sequence of Methylococcus capsulatus (Bath).</title>
        <authorList>
            <person name="Ward N.L."/>
            <person name="Larsen O."/>
            <person name="Sakwa J."/>
            <person name="Bruseth L."/>
            <person name="Khouri H.M."/>
            <person name="Durkin A.S."/>
            <person name="Dimitrov G."/>
            <person name="Jiang L."/>
            <person name="Scanlan D."/>
            <person name="Kang K.H."/>
            <person name="Lewis M.R."/>
            <person name="Nelson K.E."/>
            <person name="Methe B.A."/>
            <person name="Wu M."/>
            <person name="Heidelberg J.F."/>
            <person name="Paulsen I.T."/>
            <person name="Fouts D.E."/>
            <person name="Ravel J."/>
            <person name="Tettelin H."/>
            <person name="Ren Q."/>
            <person name="Read T.D."/>
            <person name="DeBoy R.T."/>
            <person name="Seshadri R."/>
            <person name="Salzberg S.L."/>
            <person name="Jensen H.B."/>
            <person name="Birkeland N.K."/>
            <person name="Nelson W.C."/>
            <person name="Dodson R.J."/>
            <person name="Grindhaug S.H."/>
            <person name="Holt I.E."/>
            <person name="Eidhammer I."/>
            <person name="Jonasen I."/>
            <person name="Vanaken S."/>
            <person name="Utterback T.R."/>
            <person name="Feldblyum T.V."/>
            <person name="Fraser C.M."/>
            <person name="Lillehaug J.R."/>
            <person name="Eisen J.A."/>
        </authorList>
    </citation>
    <scope>NUCLEOTIDE SEQUENCE [LARGE SCALE GENOMIC DNA]</scope>
    <source>
        <strain>ATCC 33009 / NCIMB 11132 / Bath</strain>
    </source>
</reference>
<protein>
    <recommendedName>
        <fullName evidence="1">3-methyl-2-oxobutanoate hydroxymethyltransferase</fullName>
        <ecNumber evidence="1">2.1.2.11</ecNumber>
    </recommendedName>
    <alternativeName>
        <fullName evidence="1">Ketopantoate hydroxymethyltransferase</fullName>
        <shortName evidence="1">KPHMT</shortName>
    </alternativeName>
</protein>
<gene>
    <name evidence="1" type="primary">panB</name>
    <name type="ordered locus">MCA2314</name>
</gene>
<keyword id="KW-0963">Cytoplasm</keyword>
<keyword id="KW-0460">Magnesium</keyword>
<keyword id="KW-0479">Metal-binding</keyword>
<keyword id="KW-0566">Pantothenate biosynthesis</keyword>
<keyword id="KW-1185">Reference proteome</keyword>
<keyword id="KW-0808">Transferase</keyword>
<accession>Q605H0</accession>
<name>PANB_METCA</name>